<organism>
    <name type="scientific">Sodalis glossinidius (strain morsitans)</name>
    <dbReference type="NCBI Taxonomy" id="343509"/>
    <lineage>
        <taxon>Bacteria</taxon>
        <taxon>Pseudomonadati</taxon>
        <taxon>Pseudomonadota</taxon>
        <taxon>Gammaproteobacteria</taxon>
        <taxon>Enterobacterales</taxon>
        <taxon>Bruguierivoracaceae</taxon>
        <taxon>Sodalis</taxon>
    </lineage>
</organism>
<gene>
    <name evidence="1" type="primary">lpoB</name>
    <name type="ordered locus">SG1070</name>
</gene>
<protein>
    <recommendedName>
        <fullName evidence="1">Penicillin-binding protein activator LpoB</fullName>
        <shortName evidence="1">PBP activator LpoB</shortName>
    </recommendedName>
</protein>
<reference key="1">
    <citation type="journal article" date="2006" name="Genome Res.">
        <title>Massive genome erosion and functional adaptations provide insights into the symbiotic lifestyle of Sodalis glossinidius in the tsetse host.</title>
        <authorList>
            <person name="Toh H."/>
            <person name="Weiss B.L."/>
            <person name="Perkin S.A.H."/>
            <person name="Yamashita A."/>
            <person name="Oshima K."/>
            <person name="Hattori M."/>
            <person name="Aksoy S."/>
        </authorList>
    </citation>
    <scope>NUCLEOTIDE SEQUENCE [LARGE SCALE GENOMIC DNA]</scope>
    <source>
        <strain>morsitans</strain>
    </source>
</reference>
<sequence length="195" mass="20376">MKKRALIVLAALVLASCTSRKPASPPAPIEPVPPPVTVSVQPPPPATSEPVPMPPKIKTIDWQASLSPLVQQMLAVEGINDGSVLLVNTMKNTTNGSVQTGKATAALTRLITDAGGKFQVVGANQLNAARQMLGLSADDSLESRSKAVGLARYLNAQYVLYSAAAGDVKQPTLDLQLMLVQTGEIIWSGNGVAQD</sequence>
<accession>Q2NU30</accession>
<comment type="function">
    <text evidence="1">Regulator of peptidoglycan synthesis that is essential for the function of penicillin-binding protein 1B (PBP1b).</text>
</comment>
<comment type="subunit">
    <text evidence="1">Interacts with PBP1b.</text>
</comment>
<comment type="subcellular location">
    <subcellularLocation>
        <location evidence="1">Cell outer membrane</location>
        <topology evidence="1">Lipid-anchor</topology>
        <orientation evidence="1">Periplasmic side</orientation>
    </subcellularLocation>
</comment>
<comment type="similarity">
    <text evidence="1">Belongs to the LpoB family.</text>
</comment>
<name>LPOB_SODGM</name>
<keyword id="KW-0998">Cell outer membrane</keyword>
<keyword id="KW-0133">Cell shape</keyword>
<keyword id="KW-0449">Lipoprotein</keyword>
<keyword id="KW-0472">Membrane</keyword>
<keyword id="KW-0564">Palmitate</keyword>
<keyword id="KW-0573">Peptidoglycan synthesis</keyword>
<keyword id="KW-0732">Signal</keyword>
<feature type="signal peptide" evidence="1">
    <location>
        <begin position="1"/>
        <end position="16"/>
    </location>
</feature>
<feature type="chain" id="PRO_0000405792" description="Penicillin-binding protein activator LpoB">
    <location>
        <begin position="17"/>
        <end position="195"/>
    </location>
</feature>
<feature type="region of interest" description="Disordered" evidence="2">
    <location>
        <begin position="19"/>
        <end position="51"/>
    </location>
</feature>
<feature type="compositionally biased region" description="Pro residues" evidence="2">
    <location>
        <begin position="23"/>
        <end position="51"/>
    </location>
</feature>
<feature type="lipid moiety-binding region" description="N-palmitoyl cysteine" evidence="1">
    <location>
        <position position="17"/>
    </location>
</feature>
<feature type="lipid moiety-binding region" description="S-diacylglycerol cysteine" evidence="1">
    <location>
        <position position="17"/>
    </location>
</feature>
<proteinExistence type="inferred from homology"/>
<evidence type="ECO:0000255" key="1">
    <source>
        <dbReference type="HAMAP-Rule" id="MF_01889"/>
    </source>
</evidence>
<evidence type="ECO:0000256" key="2">
    <source>
        <dbReference type="SAM" id="MobiDB-lite"/>
    </source>
</evidence>
<dbReference type="EMBL" id="AP008232">
    <property type="protein sequence ID" value="BAE74345.1"/>
    <property type="molecule type" value="Genomic_DNA"/>
</dbReference>
<dbReference type="RefSeq" id="WP_011410930.1">
    <property type="nucleotide sequence ID" value="NC_007712.1"/>
</dbReference>
<dbReference type="SMR" id="Q2NU30"/>
<dbReference type="STRING" id="343509.SG1070"/>
<dbReference type="KEGG" id="sgl:SG1070"/>
<dbReference type="eggNOG" id="COG3417">
    <property type="taxonomic scope" value="Bacteria"/>
</dbReference>
<dbReference type="HOGENOM" id="CLU_092328_0_0_6"/>
<dbReference type="OrthoDB" id="6466283at2"/>
<dbReference type="BioCyc" id="SGLO343509:SGP1_RS09210-MONOMER"/>
<dbReference type="Proteomes" id="UP000001932">
    <property type="component" value="Chromosome"/>
</dbReference>
<dbReference type="GO" id="GO:0031241">
    <property type="term" value="C:periplasmic side of cell outer membrane"/>
    <property type="evidence" value="ECO:0007669"/>
    <property type="project" value="UniProtKB-UniRule"/>
</dbReference>
<dbReference type="GO" id="GO:0030234">
    <property type="term" value="F:enzyme regulator activity"/>
    <property type="evidence" value="ECO:0007669"/>
    <property type="project" value="UniProtKB-UniRule"/>
</dbReference>
<dbReference type="GO" id="GO:0009252">
    <property type="term" value="P:peptidoglycan biosynthetic process"/>
    <property type="evidence" value="ECO:0007669"/>
    <property type="project" value="UniProtKB-UniRule"/>
</dbReference>
<dbReference type="GO" id="GO:0008360">
    <property type="term" value="P:regulation of cell shape"/>
    <property type="evidence" value="ECO:0007669"/>
    <property type="project" value="UniProtKB-KW"/>
</dbReference>
<dbReference type="Gene3D" id="3.40.50.10610">
    <property type="entry name" value="ABC-type transport auxiliary lipoprotein component"/>
    <property type="match status" value="1"/>
</dbReference>
<dbReference type="HAMAP" id="MF_01889">
    <property type="entry name" value="LpoB"/>
    <property type="match status" value="1"/>
</dbReference>
<dbReference type="InterPro" id="IPR014094">
    <property type="entry name" value="LpoB"/>
</dbReference>
<dbReference type="NCBIfam" id="TIGR02722">
    <property type="entry name" value="lp"/>
    <property type="match status" value="1"/>
</dbReference>
<dbReference type="PANTHER" id="PTHR40593">
    <property type="entry name" value="PENICILLIN-BINDING PROTEIN ACTIVATOR LPOB"/>
    <property type="match status" value="1"/>
</dbReference>
<dbReference type="PANTHER" id="PTHR40593:SF1">
    <property type="entry name" value="PENICILLIN-BINDING PROTEIN ACTIVATOR LPOB"/>
    <property type="match status" value="1"/>
</dbReference>
<dbReference type="Pfam" id="PF13036">
    <property type="entry name" value="LpoB"/>
    <property type="match status" value="1"/>
</dbReference>
<dbReference type="PROSITE" id="PS51257">
    <property type="entry name" value="PROKAR_LIPOPROTEIN"/>
    <property type="match status" value="1"/>
</dbReference>